<accession>A9NEC5</accession>
<comment type="function">
    <text evidence="1">Specifically methylates the N7 position of a guanine in 16S rRNA.</text>
</comment>
<comment type="subcellular location">
    <subcellularLocation>
        <location evidence="1">Cytoplasm</location>
    </subcellularLocation>
</comment>
<comment type="similarity">
    <text evidence="1">Belongs to the methyltransferase superfamily. RNA methyltransferase RsmG family.</text>
</comment>
<dbReference type="EC" id="2.1.1.-" evidence="1"/>
<dbReference type="EMBL" id="CP000896">
    <property type="protein sequence ID" value="ABX80705.1"/>
    <property type="molecule type" value="Genomic_DNA"/>
</dbReference>
<dbReference type="RefSeq" id="WP_012242036.1">
    <property type="nucleotide sequence ID" value="NC_010163.1"/>
</dbReference>
<dbReference type="SMR" id="A9NEC5"/>
<dbReference type="STRING" id="441768.ACL_0064"/>
<dbReference type="GeneID" id="41338267"/>
<dbReference type="KEGG" id="acl:ACL_0064"/>
<dbReference type="eggNOG" id="COG0357">
    <property type="taxonomic scope" value="Bacteria"/>
</dbReference>
<dbReference type="HOGENOM" id="CLU_065341_0_0_14"/>
<dbReference type="OrthoDB" id="9808773at2"/>
<dbReference type="Proteomes" id="UP000008558">
    <property type="component" value="Chromosome"/>
</dbReference>
<dbReference type="GO" id="GO:0005829">
    <property type="term" value="C:cytosol"/>
    <property type="evidence" value="ECO:0007669"/>
    <property type="project" value="TreeGrafter"/>
</dbReference>
<dbReference type="GO" id="GO:0070043">
    <property type="term" value="F:rRNA (guanine-N7-)-methyltransferase activity"/>
    <property type="evidence" value="ECO:0007669"/>
    <property type="project" value="UniProtKB-UniRule"/>
</dbReference>
<dbReference type="FunFam" id="3.40.50.150:FF:000041">
    <property type="entry name" value="Ribosomal RNA small subunit methyltransferase G"/>
    <property type="match status" value="1"/>
</dbReference>
<dbReference type="Gene3D" id="3.40.50.150">
    <property type="entry name" value="Vaccinia Virus protein VP39"/>
    <property type="match status" value="1"/>
</dbReference>
<dbReference type="HAMAP" id="MF_00074">
    <property type="entry name" value="16SrRNA_methyltr_G"/>
    <property type="match status" value="1"/>
</dbReference>
<dbReference type="InterPro" id="IPR003682">
    <property type="entry name" value="rRNA_ssu_MeTfrase_G"/>
</dbReference>
<dbReference type="InterPro" id="IPR029063">
    <property type="entry name" value="SAM-dependent_MTases_sf"/>
</dbReference>
<dbReference type="NCBIfam" id="TIGR00138">
    <property type="entry name" value="rsmG_gidB"/>
    <property type="match status" value="1"/>
</dbReference>
<dbReference type="PANTHER" id="PTHR31760">
    <property type="entry name" value="S-ADENOSYL-L-METHIONINE-DEPENDENT METHYLTRANSFERASES SUPERFAMILY PROTEIN"/>
    <property type="match status" value="1"/>
</dbReference>
<dbReference type="PANTHER" id="PTHR31760:SF0">
    <property type="entry name" value="S-ADENOSYL-L-METHIONINE-DEPENDENT METHYLTRANSFERASES SUPERFAMILY PROTEIN"/>
    <property type="match status" value="1"/>
</dbReference>
<dbReference type="Pfam" id="PF02527">
    <property type="entry name" value="GidB"/>
    <property type="match status" value="1"/>
</dbReference>
<dbReference type="SUPFAM" id="SSF53335">
    <property type="entry name" value="S-adenosyl-L-methionine-dependent methyltransferases"/>
    <property type="match status" value="1"/>
</dbReference>
<reference key="1">
    <citation type="journal article" date="2011" name="J. Bacteriol.">
        <title>Complete genome and proteome of Acholeplasma laidlawii.</title>
        <authorList>
            <person name="Lazarev V.N."/>
            <person name="Levitskii S.A."/>
            <person name="Basovskii Y.I."/>
            <person name="Chukin M.M."/>
            <person name="Akopian T.A."/>
            <person name="Vereshchagin V.V."/>
            <person name="Kostrjukova E.S."/>
            <person name="Kovaleva G.Y."/>
            <person name="Kazanov M.D."/>
            <person name="Malko D.B."/>
            <person name="Vitreschak A.G."/>
            <person name="Sernova N.V."/>
            <person name="Gelfand M.S."/>
            <person name="Demina I.A."/>
            <person name="Serebryakova M.V."/>
            <person name="Galyamina M.A."/>
            <person name="Vtyurin N.N."/>
            <person name="Rogov S.I."/>
            <person name="Alexeev D.G."/>
            <person name="Ladygina V.G."/>
            <person name="Govorun V.M."/>
        </authorList>
    </citation>
    <scope>NUCLEOTIDE SEQUENCE [LARGE SCALE GENOMIC DNA]</scope>
    <source>
        <strain>PG-8A</strain>
    </source>
</reference>
<organism>
    <name type="scientific">Acholeplasma laidlawii (strain PG-8A)</name>
    <dbReference type="NCBI Taxonomy" id="441768"/>
    <lineage>
        <taxon>Bacteria</taxon>
        <taxon>Bacillati</taxon>
        <taxon>Mycoplasmatota</taxon>
        <taxon>Mollicutes</taxon>
        <taxon>Acholeplasmatales</taxon>
        <taxon>Acholeplasmataceae</taxon>
        <taxon>Acholeplasma</taxon>
    </lineage>
</organism>
<evidence type="ECO:0000255" key="1">
    <source>
        <dbReference type="HAMAP-Rule" id="MF_00074"/>
    </source>
</evidence>
<gene>
    <name evidence="1" type="primary">rsmG</name>
    <name type="ordered locus">ACL_0064</name>
</gene>
<protein>
    <recommendedName>
        <fullName evidence="1">Ribosomal RNA small subunit methyltransferase G</fullName>
        <ecNumber evidence="1">2.1.1.-</ecNumber>
    </recommendedName>
    <alternativeName>
        <fullName evidence="1">16S rRNA 7-methylguanosine methyltransferase</fullName>
        <shortName evidence="1">16S rRNA m7G methyltransferase</shortName>
    </alternativeName>
</protein>
<feature type="chain" id="PRO_0000335302" description="Ribosomal RNA small subunit methyltransferase G">
    <location>
        <begin position="1"/>
        <end position="230"/>
    </location>
</feature>
<feature type="binding site" evidence="1">
    <location>
        <position position="74"/>
    </location>
    <ligand>
        <name>S-adenosyl-L-methionine</name>
        <dbReference type="ChEBI" id="CHEBI:59789"/>
    </ligand>
</feature>
<feature type="binding site" evidence="1">
    <location>
        <position position="79"/>
    </location>
    <ligand>
        <name>S-adenosyl-L-methionine</name>
        <dbReference type="ChEBI" id="CHEBI:59789"/>
    </ligand>
</feature>
<feature type="binding site" evidence="1">
    <location>
        <begin position="124"/>
        <end position="125"/>
    </location>
    <ligand>
        <name>S-adenosyl-L-methionine</name>
        <dbReference type="ChEBI" id="CHEBI:59789"/>
    </ligand>
</feature>
<feature type="binding site" evidence="1">
    <location>
        <position position="141"/>
    </location>
    <ligand>
        <name>S-adenosyl-L-methionine</name>
        <dbReference type="ChEBI" id="CHEBI:59789"/>
    </ligand>
</feature>
<name>RSMG_ACHLI</name>
<keyword id="KW-0963">Cytoplasm</keyword>
<keyword id="KW-0489">Methyltransferase</keyword>
<keyword id="KW-1185">Reference proteome</keyword>
<keyword id="KW-0698">rRNA processing</keyword>
<keyword id="KW-0949">S-adenosyl-L-methionine</keyword>
<keyword id="KW-0808">Transferase</keyword>
<sequence length="230" mass="25982">MLNTYITNILGIKLTEQQNGQFDAYYNLLVAYNKHTNLTRITSRDDADIKHFLDSVLISKLVDLNKVVTLCDMGAGAGFPSIPLLIVFPNIQVTIVESQIKRVQFLQELKQALGLEFNIVHDRAENFSSKNYQQFDIVTARALGELRLILEFGVPMLKVGGHFIAPKGSKFEEELTSAAHAIKVLNVELITQDLFELPLESGFRANLLFRKEKHVSGYPRPFPIIKKKPL</sequence>
<proteinExistence type="inferred from homology"/>